<protein>
    <recommendedName>
        <fullName>Probable tyrosine-protein phosphatase pir-2</fullName>
        <ecNumber evidence="2">3.1.3.48</ecNumber>
    </recommendedName>
</protein>
<organism>
    <name type="scientific">Caenorhabditis elegans</name>
    <dbReference type="NCBI Taxonomy" id="6239"/>
    <lineage>
        <taxon>Eukaryota</taxon>
        <taxon>Metazoa</taxon>
        <taxon>Ecdysozoa</taxon>
        <taxon>Nematoda</taxon>
        <taxon>Chromadorea</taxon>
        <taxon>Rhabditida</taxon>
        <taxon>Rhabditina</taxon>
        <taxon>Rhabditomorpha</taxon>
        <taxon>Rhabditoidea</taxon>
        <taxon>Rhabditidae</taxon>
        <taxon>Peloderinae</taxon>
        <taxon>Caenorhabditis</taxon>
    </lineage>
</organism>
<reference key="1">
    <citation type="journal article" date="1994" name="Nature">
        <title>2.2 Mb of contiguous nucleotide sequence from chromosome III of C. elegans.</title>
        <authorList>
            <person name="Wilson R."/>
            <person name="Ainscough R."/>
            <person name="Anderson K."/>
            <person name="Baynes C."/>
            <person name="Berks M."/>
            <person name="Bonfield J."/>
            <person name="Burton J."/>
            <person name="Connell M."/>
            <person name="Copsey T."/>
            <person name="Cooper J."/>
            <person name="Coulson A."/>
            <person name="Craxton M."/>
            <person name="Dear S."/>
            <person name="Du Z."/>
            <person name="Durbin R."/>
            <person name="Favello A."/>
            <person name="Fraser A."/>
            <person name="Fulton L."/>
            <person name="Gardner A."/>
            <person name="Green P."/>
            <person name="Hawkins T."/>
            <person name="Hillier L."/>
            <person name="Jier M."/>
            <person name="Johnston L."/>
            <person name="Jones M."/>
            <person name="Kershaw J."/>
            <person name="Kirsten J."/>
            <person name="Laisster N."/>
            <person name="Latreille P."/>
            <person name="Lightning J."/>
            <person name="Lloyd C."/>
            <person name="Mortimore B."/>
            <person name="O'Callaghan M."/>
            <person name="Parsons J."/>
            <person name="Percy C."/>
            <person name="Rifken L."/>
            <person name="Roopra A."/>
            <person name="Saunders D."/>
            <person name="Shownkeen R."/>
            <person name="Sims M."/>
            <person name="Smaldon N."/>
            <person name="Smith A."/>
            <person name="Smith M."/>
            <person name="Sonnhammer E."/>
            <person name="Staden R."/>
            <person name="Sulston J."/>
            <person name="Thierry-Mieg J."/>
            <person name="Thomas K."/>
            <person name="Vaudin M."/>
            <person name="Vaughan K."/>
            <person name="Waterston R."/>
            <person name="Watson A."/>
            <person name="Weinstock L."/>
            <person name="Wilkinson-Sproat J."/>
            <person name="Wohldman P."/>
        </authorList>
    </citation>
    <scope>NUCLEOTIDE SEQUENCE [LARGE SCALE GENOMIC DNA]</scope>
    <source>
        <strain>Bristol N2</strain>
    </source>
</reference>
<reference key="2">
    <citation type="journal article" date="1998" name="Science">
        <title>Genome sequence of the nematode C. elegans: a platform for investigating biology.</title>
        <authorList>
            <consortium name="The C. elegans sequencing consortium"/>
        </authorList>
    </citation>
    <scope>NUCLEOTIDE SEQUENCE [LARGE SCALE GENOMIC DNA]</scope>
    <source>
        <strain>Bristol N2</strain>
    </source>
</reference>
<proteinExistence type="inferred from homology"/>
<dbReference type="EC" id="3.1.3.48" evidence="2"/>
<dbReference type="EMBL" id="Z22178">
    <property type="protein sequence ID" value="CAA80156.1"/>
    <property type="molecule type" value="Genomic_DNA"/>
</dbReference>
<dbReference type="PIR" id="S40746">
    <property type="entry name" value="S40746"/>
</dbReference>
<dbReference type="SMR" id="P34442"/>
<dbReference type="BioGRID" id="41520">
    <property type="interactions" value="2"/>
</dbReference>
<dbReference type="FunCoup" id="P34442">
    <property type="interactions" value="1015"/>
</dbReference>
<dbReference type="STRING" id="6239.F54C8.4a.1"/>
<dbReference type="PaxDb" id="6239-F54C8.4a"/>
<dbReference type="PeptideAtlas" id="P34442"/>
<dbReference type="EnsemblMetazoa" id="F54C8.4a.1">
    <property type="protein sequence ID" value="F54C8.4a.1"/>
    <property type="gene ID" value="WBGene00010037"/>
</dbReference>
<dbReference type="KEGG" id="cel:CELE_F54C8.4"/>
<dbReference type="UCSC" id="F54C8.4">
    <property type="organism name" value="c. elegans"/>
</dbReference>
<dbReference type="AGR" id="WB:WBGene00010037"/>
<dbReference type="CTD" id="176323"/>
<dbReference type="WormBase" id="F54C8.4a">
    <property type="protein sequence ID" value="CE00190"/>
    <property type="gene ID" value="WBGene00010037"/>
    <property type="gene designation" value="pir-2"/>
</dbReference>
<dbReference type="eggNOG" id="KOG2386">
    <property type="taxonomic scope" value="Eukaryota"/>
</dbReference>
<dbReference type="GeneTree" id="ENSGT00940000168004"/>
<dbReference type="HOGENOM" id="CLU_065449_0_0_1"/>
<dbReference type="InParanoid" id="P34442"/>
<dbReference type="OMA" id="YEKINCP"/>
<dbReference type="OrthoDB" id="428974at2759"/>
<dbReference type="PhylomeDB" id="P34442"/>
<dbReference type="PRO" id="PR:P34442"/>
<dbReference type="Proteomes" id="UP000001940">
    <property type="component" value="Chromosome III"/>
</dbReference>
<dbReference type="Bgee" id="WBGene00010037">
    <property type="expression patterns" value="Expressed in germ line (C elegans) and 4 other cell types or tissues"/>
</dbReference>
<dbReference type="ExpressionAtlas" id="P34442">
    <property type="expression patterns" value="baseline and differential"/>
</dbReference>
<dbReference type="GO" id="GO:0004651">
    <property type="term" value="F:polynucleotide 5'-phosphatase activity"/>
    <property type="evidence" value="ECO:0000318"/>
    <property type="project" value="GO_Central"/>
</dbReference>
<dbReference type="GO" id="GO:0004725">
    <property type="term" value="F:protein tyrosine phosphatase activity"/>
    <property type="evidence" value="ECO:0007669"/>
    <property type="project" value="UniProtKB-EC"/>
</dbReference>
<dbReference type="CDD" id="cd17665">
    <property type="entry name" value="DSP_DUSP11"/>
    <property type="match status" value="1"/>
</dbReference>
<dbReference type="FunFam" id="3.90.190.10:FF:000214">
    <property type="entry name" value="Probable tyrosine-protein phosphatase F54C8.4"/>
    <property type="match status" value="1"/>
</dbReference>
<dbReference type="Gene3D" id="3.90.190.10">
    <property type="entry name" value="Protein tyrosine phosphatase superfamily"/>
    <property type="match status" value="1"/>
</dbReference>
<dbReference type="InterPro" id="IPR000340">
    <property type="entry name" value="Dual-sp_phosphatase_cat-dom"/>
</dbReference>
<dbReference type="InterPro" id="IPR051029">
    <property type="entry name" value="mRNA_Capping_Enz/RNA_Phosphat"/>
</dbReference>
<dbReference type="InterPro" id="IPR029021">
    <property type="entry name" value="Prot-tyrosine_phosphatase-like"/>
</dbReference>
<dbReference type="InterPro" id="IPR016130">
    <property type="entry name" value="Tyr_Pase_AS"/>
</dbReference>
<dbReference type="InterPro" id="IPR000387">
    <property type="entry name" value="Tyr_Pase_dom"/>
</dbReference>
<dbReference type="InterPro" id="IPR020422">
    <property type="entry name" value="TYR_PHOSPHATASE_DUAL_dom"/>
</dbReference>
<dbReference type="PANTHER" id="PTHR10367">
    <property type="entry name" value="MRNA-CAPPING ENZYME"/>
    <property type="match status" value="1"/>
</dbReference>
<dbReference type="PANTHER" id="PTHR10367:SF27">
    <property type="entry name" value="TYROSINE-PROTEIN PHOSPHATASE F54C8.4-RELATED"/>
    <property type="match status" value="1"/>
</dbReference>
<dbReference type="Pfam" id="PF00782">
    <property type="entry name" value="DSPc"/>
    <property type="match status" value="1"/>
</dbReference>
<dbReference type="SMART" id="SM00195">
    <property type="entry name" value="DSPc"/>
    <property type="match status" value="1"/>
</dbReference>
<dbReference type="SUPFAM" id="SSF52799">
    <property type="entry name" value="(Phosphotyrosine protein) phosphatases II"/>
    <property type="match status" value="1"/>
</dbReference>
<dbReference type="PROSITE" id="PS00383">
    <property type="entry name" value="TYR_PHOSPHATASE_1"/>
    <property type="match status" value="1"/>
</dbReference>
<dbReference type="PROSITE" id="PS50056">
    <property type="entry name" value="TYR_PHOSPHATASE_2"/>
    <property type="match status" value="1"/>
</dbReference>
<dbReference type="PROSITE" id="PS50054">
    <property type="entry name" value="TYR_PHOSPHATASE_DUAL"/>
    <property type="match status" value="1"/>
</dbReference>
<comment type="catalytic activity">
    <reaction evidence="2">
        <text>O-phospho-L-tyrosyl-[protein] + H2O = L-tyrosyl-[protein] + phosphate</text>
        <dbReference type="Rhea" id="RHEA:10684"/>
        <dbReference type="Rhea" id="RHEA-COMP:10136"/>
        <dbReference type="Rhea" id="RHEA-COMP:20101"/>
        <dbReference type="ChEBI" id="CHEBI:15377"/>
        <dbReference type="ChEBI" id="CHEBI:43474"/>
        <dbReference type="ChEBI" id="CHEBI:46858"/>
        <dbReference type="ChEBI" id="CHEBI:61978"/>
        <dbReference type="EC" id="3.1.3.48"/>
    </reaction>
</comment>
<comment type="similarity">
    <text evidence="4">Belongs to the protein-tyrosine phosphatase family. Non-receptor class CDC14 subfamily.</text>
</comment>
<name>PTP5_CAEEL</name>
<accession>P34442</accession>
<sequence>MVRVCRVVPKDWSKFQPVGNVIPRTRFIVFKTPINSQLSTKIHKEQRFTTNDLFRQLSERGQYLGLVVDLSDTDRYYDKKDITGMCVQYEKVNCPGRGFIERDDCVESFHQVIQDYTDKCDDPDALIGVHCTNGINRCGYLICRFLIDRLGWSSHEAIDAFEQARGYSIEKGAYVMALHKAAKDKRDKQVDSDSDSSERQRKKKNKRKHREIVEHENIVLINTIIGELGSQAASVSGTDYQNSPNGVSVDPGQPQPHHWGFAIKRSKYAQLNQPVANGANTPPEPSEGTPQEEEEFEEDFEEIEEETETEPGKGQSVSSKRRARRNRMQKYMQVMQRGRFHEIQAIREEVALSHGSARD</sequence>
<feature type="chain" id="PRO_0000094885" description="Probable tyrosine-protein phosphatase pir-2">
    <location>
        <begin position="1"/>
        <end position="359"/>
    </location>
</feature>
<feature type="domain" description="Tyrosine-protein phosphatase" evidence="1">
    <location>
        <begin position="16"/>
        <end position="191"/>
    </location>
</feature>
<feature type="region of interest" description="Disordered" evidence="3">
    <location>
        <begin position="184"/>
        <end position="211"/>
    </location>
</feature>
<feature type="region of interest" description="Disordered" evidence="3">
    <location>
        <begin position="234"/>
        <end position="259"/>
    </location>
</feature>
<feature type="region of interest" description="Disordered" evidence="3">
    <location>
        <begin position="274"/>
        <end position="328"/>
    </location>
</feature>
<feature type="compositionally biased region" description="Basic and acidic residues" evidence="3">
    <location>
        <begin position="184"/>
        <end position="199"/>
    </location>
</feature>
<feature type="compositionally biased region" description="Basic residues" evidence="3">
    <location>
        <begin position="200"/>
        <end position="210"/>
    </location>
</feature>
<feature type="compositionally biased region" description="Polar residues" evidence="3">
    <location>
        <begin position="234"/>
        <end position="246"/>
    </location>
</feature>
<feature type="compositionally biased region" description="Acidic residues" evidence="3">
    <location>
        <begin position="290"/>
        <end position="309"/>
    </location>
</feature>
<feature type="compositionally biased region" description="Basic residues" evidence="3">
    <location>
        <begin position="319"/>
        <end position="328"/>
    </location>
</feature>
<feature type="active site" description="Phosphocysteine intermediate" evidence="1">
    <location>
        <position position="131"/>
    </location>
</feature>
<gene>
    <name evidence="5" type="primary">pir-2</name>
    <name type="ORF">F54C8.4</name>
</gene>
<keyword id="KW-0378">Hydrolase</keyword>
<keyword id="KW-0904">Protein phosphatase</keyword>
<keyword id="KW-1185">Reference proteome</keyword>
<evidence type="ECO:0000255" key="1">
    <source>
        <dbReference type="PROSITE-ProRule" id="PRU00160"/>
    </source>
</evidence>
<evidence type="ECO:0000255" key="2">
    <source>
        <dbReference type="PROSITE-ProRule" id="PRU10044"/>
    </source>
</evidence>
<evidence type="ECO:0000256" key="3">
    <source>
        <dbReference type="SAM" id="MobiDB-lite"/>
    </source>
</evidence>
<evidence type="ECO:0000305" key="4"/>
<evidence type="ECO:0000312" key="5">
    <source>
        <dbReference type="WormBase" id="F54C8.4a"/>
    </source>
</evidence>